<reference key="1">
    <citation type="journal article" date="2001" name="Proc. Natl. Acad. Sci. U.S.A.">
        <title>Genome sequence of an industrial microorganism Streptomyces avermitilis: deducing the ability of producing secondary metabolites.</title>
        <authorList>
            <person name="Omura S."/>
            <person name="Ikeda H."/>
            <person name="Ishikawa J."/>
            <person name="Hanamoto A."/>
            <person name="Takahashi C."/>
            <person name="Shinose M."/>
            <person name="Takahashi Y."/>
            <person name="Horikawa H."/>
            <person name="Nakazawa H."/>
            <person name="Osonoe T."/>
            <person name="Kikuchi H."/>
            <person name="Shiba T."/>
            <person name="Sakaki Y."/>
            <person name="Hattori M."/>
        </authorList>
    </citation>
    <scope>NUCLEOTIDE SEQUENCE [LARGE SCALE GENOMIC DNA]</scope>
    <source>
        <strain>ATCC 31267 / DSM 46492 / JCM 5070 / NBRC 14893 / NCIMB 12804 / NRRL 8165 / MA-4680</strain>
    </source>
</reference>
<reference key="2">
    <citation type="journal article" date="2003" name="Nat. Biotechnol.">
        <title>Complete genome sequence and comparative analysis of the industrial microorganism Streptomyces avermitilis.</title>
        <authorList>
            <person name="Ikeda H."/>
            <person name="Ishikawa J."/>
            <person name="Hanamoto A."/>
            <person name="Shinose M."/>
            <person name="Kikuchi H."/>
            <person name="Shiba T."/>
            <person name="Sakaki Y."/>
            <person name="Hattori M."/>
            <person name="Omura S."/>
        </authorList>
    </citation>
    <scope>NUCLEOTIDE SEQUENCE [LARGE SCALE GENOMIC DNA]</scope>
    <source>
        <strain>ATCC 31267 / DSM 46492 / JCM 5070 / NBRC 14893 / NCIMB 12804 / NRRL 8165 / MA-4680</strain>
    </source>
</reference>
<comment type="catalytic activity">
    <reaction evidence="1">
        <text>L-citrulline + L-aspartate + ATP = 2-(N(omega)-L-arginino)succinate + AMP + diphosphate + H(+)</text>
        <dbReference type="Rhea" id="RHEA:10932"/>
        <dbReference type="ChEBI" id="CHEBI:15378"/>
        <dbReference type="ChEBI" id="CHEBI:29991"/>
        <dbReference type="ChEBI" id="CHEBI:30616"/>
        <dbReference type="ChEBI" id="CHEBI:33019"/>
        <dbReference type="ChEBI" id="CHEBI:57472"/>
        <dbReference type="ChEBI" id="CHEBI:57743"/>
        <dbReference type="ChEBI" id="CHEBI:456215"/>
        <dbReference type="EC" id="6.3.4.5"/>
    </reaction>
</comment>
<comment type="pathway">
    <text evidence="1">Amino-acid biosynthesis; L-arginine biosynthesis; L-arginine from L-ornithine and carbamoyl phosphate: step 2/3.</text>
</comment>
<comment type="subunit">
    <text evidence="1">Homotetramer.</text>
</comment>
<comment type="subcellular location">
    <subcellularLocation>
        <location evidence="1">Cytoplasm</location>
    </subcellularLocation>
</comment>
<comment type="similarity">
    <text evidence="1">Belongs to the argininosuccinate synthase family. Type 1 subfamily.</text>
</comment>
<name>ASSY_STRAW</name>
<evidence type="ECO:0000255" key="1">
    <source>
        <dbReference type="HAMAP-Rule" id="MF_00005"/>
    </source>
</evidence>
<feature type="chain" id="PRO_0000148645" description="Argininosuccinate synthase">
    <location>
        <begin position="1"/>
        <end position="404"/>
    </location>
</feature>
<feature type="binding site" evidence="1">
    <location>
        <begin position="15"/>
        <end position="23"/>
    </location>
    <ligand>
        <name>ATP</name>
        <dbReference type="ChEBI" id="CHEBI:30616"/>
    </ligand>
</feature>
<feature type="binding site" evidence="1">
    <location>
        <position position="94"/>
    </location>
    <ligand>
        <name>L-citrulline</name>
        <dbReference type="ChEBI" id="CHEBI:57743"/>
    </ligand>
</feature>
<feature type="binding site" evidence="1">
    <location>
        <position position="124"/>
    </location>
    <ligand>
        <name>ATP</name>
        <dbReference type="ChEBI" id="CHEBI:30616"/>
    </ligand>
</feature>
<feature type="binding site" evidence="1">
    <location>
        <position position="126"/>
    </location>
    <ligand>
        <name>L-aspartate</name>
        <dbReference type="ChEBI" id="CHEBI:29991"/>
    </ligand>
</feature>
<feature type="binding site" evidence="1">
    <location>
        <position position="130"/>
    </location>
    <ligand>
        <name>L-aspartate</name>
        <dbReference type="ChEBI" id="CHEBI:29991"/>
    </ligand>
</feature>
<feature type="binding site" evidence="1">
    <location>
        <position position="130"/>
    </location>
    <ligand>
        <name>L-citrulline</name>
        <dbReference type="ChEBI" id="CHEBI:57743"/>
    </ligand>
</feature>
<feature type="binding site" evidence="1">
    <location>
        <position position="131"/>
    </location>
    <ligand>
        <name>L-aspartate</name>
        <dbReference type="ChEBI" id="CHEBI:29991"/>
    </ligand>
</feature>
<feature type="binding site" evidence="1">
    <location>
        <position position="134"/>
    </location>
    <ligand>
        <name>L-citrulline</name>
        <dbReference type="ChEBI" id="CHEBI:57743"/>
    </ligand>
</feature>
<feature type="binding site" evidence="1">
    <location>
        <position position="182"/>
    </location>
    <ligand>
        <name>L-citrulline</name>
        <dbReference type="ChEBI" id="CHEBI:57743"/>
    </ligand>
</feature>
<feature type="binding site" evidence="1">
    <location>
        <position position="266"/>
    </location>
    <ligand>
        <name>L-citrulline</name>
        <dbReference type="ChEBI" id="CHEBI:57743"/>
    </ligand>
</feature>
<feature type="binding site" evidence="1">
    <location>
        <position position="278"/>
    </location>
    <ligand>
        <name>L-citrulline</name>
        <dbReference type="ChEBI" id="CHEBI:57743"/>
    </ligand>
</feature>
<gene>
    <name evidence="1" type="primary">argG</name>
    <name type="synonym">argG2</name>
    <name type="ordered locus">SAV_6778</name>
</gene>
<organism>
    <name type="scientific">Streptomyces avermitilis (strain ATCC 31267 / DSM 46492 / JCM 5070 / NBRC 14893 / NCIMB 12804 / NRRL 8165 / MA-4680)</name>
    <dbReference type="NCBI Taxonomy" id="227882"/>
    <lineage>
        <taxon>Bacteria</taxon>
        <taxon>Bacillati</taxon>
        <taxon>Actinomycetota</taxon>
        <taxon>Actinomycetes</taxon>
        <taxon>Kitasatosporales</taxon>
        <taxon>Streptomycetaceae</taxon>
        <taxon>Streptomyces</taxon>
    </lineage>
</organism>
<keyword id="KW-0028">Amino-acid biosynthesis</keyword>
<keyword id="KW-0055">Arginine biosynthesis</keyword>
<keyword id="KW-0067">ATP-binding</keyword>
<keyword id="KW-0963">Cytoplasm</keyword>
<keyword id="KW-0436">Ligase</keyword>
<keyword id="KW-0547">Nucleotide-binding</keyword>
<keyword id="KW-1185">Reference proteome</keyword>
<sequence>MQCEEKPVTERVVLAYSGGLDTSVAIGWIAEETGAEVIAVAVDVGQGGEDLDVIRKRALACGAVEAEVADAKDEFADEYCLPAVKANALYMDRYPLVSALSRPTIVKHLVAAAQKHGATTVAHGCTGKGNDQVRFEAGIVALAPGLKCIAPVRDYAMTRDKAIAFCEEKRLPIATTKKSPYSIDQNVFGRAVETGFLEDIWNAPIEDIYEYTSNPAEPREADEVVISFKEGVPVAIDGRPVTVLQAIQQLNERAGAQGVGRIDMVEDRLVGIKSREVYEAPGAIALITAHQELENVTVERELARYKRQVEQRWGELVYDGQWFSPLKRALEGFIDEANQHVNGDIRMTLHGGRAVVTGRRSETSLYDFNLATYDTGDSFDQAAAKGFIDIYSLSSKIAAKRDLA</sequence>
<proteinExistence type="inferred from homology"/>
<accession>Q827Z1</accession>
<protein>
    <recommendedName>
        <fullName evidence="1">Argininosuccinate synthase</fullName>
        <ecNumber evidence="1">6.3.4.5</ecNumber>
    </recommendedName>
    <alternativeName>
        <fullName evidence="1">Citrulline--aspartate ligase</fullName>
    </alternativeName>
</protein>
<dbReference type="EC" id="6.3.4.5" evidence="1"/>
<dbReference type="EMBL" id="BA000030">
    <property type="protein sequence ID" value="BAC74489.1"/>
    <property type="molecule type" value="Genomic_DNA"/>
</dbReference>
<dbReference type="SMR" id="Q827Z1"/>
<dbReference type="KEGG" id="sma:SAVERM_6778"/>
<dbReference type="eggNOG" id="COG0137">
    <property type="taxonomic scope" value="Bacteria"/>
</dbReference>
<dbReference type="HOGENOM" id="CLU_032784_4_2_11"/>
<dbReference type="UniPathway" id="UPA00068">
    <property type="reaction ID" value="UER00113"/>
</dbReference>
<dbReference type="Proteomes" id="UP000000428">
    <property type="component" value="Chromosome"/>
</dbReference>
<dbReference type="GO" id="GO:0005737">
    <property type="term" value="C:cytoplasm"/>
    <property type="evidence" value="ECO:0007669"/>
    <property type="project" value="UniProtKB-SubCell"/>
</dbReference>
<dbReference type="GO" id="GO:0004055">
    <property type="term" value="F:argininosuccinate synthase activity"/>
    <property type="evidence" value="ECO:0007669"/>
    <property type="project" value="UniProtKB-UniRule"/>
</dbReference>
<dbReference type="GO" id="GO:0005524">
    <property type="term" value="F:ATP binding"/>
    <property type="evidence" value="ECO:0007669"/>
    <property type="project" value="UniProtKB-UniRule"/>
</dbReference>
<dbReference type="GO" id="GO:0000053">
    <property type="term" value="P:argininosuccinate metabolic process"/>
    <property type="evidence" value="ECO:0007669"/>
    <property type="project" value="TreeGrafter"/>
</dbReference>
<dbReference type="GO" id="GO:0006526">
    <property type="term" value="P:L-arginine biosynthetic process"/>
    <property type="evidence" value="ECO:0007669"/>
    <property type="project" value="UniProtKB-UniRule"/>
</dbReference>
<dbReference type="GO" id="GO:0000050">
    <property type="term" value="P:urea cycle"/>
    <property type="evidence" value="ECO:0007669"/>
    <property type="project" value="TreeGrafter"/>
</dbReference>
<dbReference type="CDD" id="cd01999">
    <property type="entry name" value="ASS"/>
    <property type="match status" value="1"/>
</dbReference>
<dbReference type="FunFam" id="3.40.50.620:FF:000038">
    <property type="entry name" value="Argininosuccinate synthase"/>
    <property type="match status" value="1"/>
</dbReference>
<dbReference type="FunFam" id="3.90.1260.10:FF:000007">
    <property type="entry name" value="Argininosuccinate synthase"/>
    <property type="match status" value="1"/>
</dbReference>
<dbReference type="Gene3D" id="3.90.1260.10">
    <property type="entry name" value="Argininosuccinate synthetase, chain A, domain 2"/>
    <property type="match status" value="1"/>
</dbReference>
<dbReference type="Gene3D" id="3.40.50.620">
    <property type="entry name" value="HUPs"/>
    <property type="match status" value="1"/>
</dbReference>
<dbReference type="Gene3D" id="1.20.5.470">
    <property type="entry name" value="Single helix bin"/>
    <property type="match status" value="1"/>
</dbReference>
<dbReference type="HAMAP" id="MF_00005">
    <property type="entry name" value="Arg_succ_synth_type1"/>
    <property type="match status" value="1"/>
</dbReference>
<dbReference type="InterPro" id="IPR048268">
    <property type="entry name" value="Arginosuc_syn_C"/>
</dbReference>
<dbReference type="InterPro" id="IPR048267">
    <property type="entry name" value="Arginosuc_syn_N"/>
</dbReference>
<dbReference type="InterPro" id="IPR001518">
    <property type="entry name" value="Arginosuc_synth"/>
</dbReference>
<dbReference type="InterPro" id="IPR018223">
    <property type="entry name" value="Arginosuc_synth_CS"/>
</dbReference>
<dbReference type="InterPro" id="IPR023434">
    <property type="entry name" value="Arginosuc_synth_type_1_subfam"/>
</dbReference>
<dbReference type="InterPro" id="IPR024074">
    <property type="entry name" value="AS_cat/multimer_dom_body"/>
</dbReference>
<dbReference type="InterPro" id="IPR014729">
    <property type="entry name" value="Rossmann-like_a/b/a_fold"/>
</dbReference>
<dbReference type="NCBIfam" id="TIGR00032">
    <property type="entry name" value="argG"/>
    <property type="match status" value="1"/>
</dbReference>
<dbReference type="NCBIfam" id="NF001770">
    <property type="entry name" value="PRK00509.1"/>
    <property type="match status" value="1"/>
</dbReference>
<dbReference type="PANTHER" id="PTHR11587">
    <property type="entry name" value="ARGININOSUCCINATE SYNTHASE"/>
    <property type="match status" value="1"/>
</dbReference>
<dbReference type="PANTHER" id="PTHR11587:SF2">
    <property type="entry name" value="ARGININOSUCCINATE SYNTHASE"/>
    <property type="match status" value="1"/>
</dbReference>
<dbReference type="Pfam" id="PF20979">
    <property type="entry name" value="Arginosuc_syn_C"/>
    <property type="match status" value="1"/>
</dbReference>
<dbReference type="Pfam" id="PF00764">
    <property type="entry name" value="Arginosuc_synth"/>
    <property type="match status" value="1"/>
</dbReference>
<dbReference type="SUPFAM" id="SSF52402">
    <property type="entry name" value="Adenine nucleotide alpha hydrolases-like"/>
    <property type="match status" value="1"/>
</dbReference>
<dbReference type="SUPFAM" id="SSF69864">
    <property type="entry name" value="Argininosuccinate synthetase, C-terminal domain"/>
    <property type="match status" value="1"/>
</dbReference>
<dbReference type="PROSITE" id="PS00564">
    <property type="entry name" value="ARGININOSUCCIN_SYN_1"/>
    <property type="match status" value="1"/>
</dbReference>
<dbReference type="PROSITE" id="PS00565">
    <property type="entry name" value="ARGININOSUCCIN_SYN_2"/>
    <property type="match status" value="1"/>
</dbReference>